<organism>
    <name type="scientific">Mus musculus</name>
    <name type="common">Mouse</name>
    <dbReference type="NCBI Taxonomy" id="10090"/>
    <lineage>
        <taxon>Eukaryota</taxon>
        <taxon>Metazoa</taxon>
        <taxon>Chordata</taxon>
        <taxon>Craniata</taxon>
        <taxon>Vertebrata</taxon>
        <taxon>Euteleostomi</taxon>
        <taxon>Mammalia</taxon>
        <taxon>Eutheria</taxon>
        <taxon>Euarchontoglires</taxon>
        <taxon>Glires</taxon>
        <taxon>Rodentia</taxon>
        <taxon>Myomorpha</taxon>
        <taxon>Muroidea</taxon>
        <taxon>Muridae</taxon>
        <taxon>Murinae</taxon>
        <taxon>Mus</taxon>
        <taxon>Mus</taxon>
    </lineage>
</organism>
<comment type="function">
    <text evidence="2">Promotes meiotic crossing over formation through its interaction with CNTD1 by participating in the crossover differentiation step of crossover-specific recombination intermediates.</text>
</comment>
<comment type="subunit">
    <text evidence="2">Interacts with CNTD1.</text>
</comment>
<comment type="subcellular location">
    <subcellularLocation>
        <location evidence="2">Nucleus</location>
    </subcellularLocation>
    <subcellularLocation>
        <location evidence="2">Chromosome</location>
    </subcellularLocation>
    <text evidence="2">Co-localized at crossover sites with CNTD1 (PubMed:32555348). Localizes on synapsed chromosome only in mid/late pachytene spermatocytes (PubMed:32555348).</text>
</comment>
<comment type="tissue specificity">
    <text evidence="2">Preferentially expressed in gonads.</text>
</comment>
<comment type="disruption phenotype">
    <text evidence="2">Mice are unfertile in both sexes. Testis weight is significantly lower. Mice males show a depletion of late prophase spermatocytes. are depleted of post-meiotic cells and their weight is significantly lower.</text>
</comment>
<name>PRR19_MOUSE</name>
<gene>
    <name evidence="4" type="primary">Prr19</name>
</gene>
<accession>B2RW88</accession>
<protein>
    <recommendedName>
        <fullName evidence="3">Proline-rich protein 19</fullName>
    </recommendedName>
</protein>
<evidence type="ECO:0000256" key="1">
    <source>
        <dbReference type="SAM" id="MobiDB-lite"/>
    </source>
</evidence>
<evidence type="ECO:0000269" key="2">
    <source>
    </source>
</evidence>
<evidence type="ECO:0000305" key="3"/>
<evidence type="ECO:0000312" key="4">
    <source>
        <dbReference type="MGI" id="MGI:3648539"/>
    </source>
</evidence>
<reference key="1">
    <citation type="journal article" date="2009" name="PLoS Biol.">
        <title>Lineage-specific biology revealed by a finished genome assembly of the mouse.</title>
        <authorList>
            <person name="Church D.M."/>
            <person name="Goodstadt L."/>
            <person name="Hillier L.W."/>
            <person name="Zody M.C."/>
            <person name="Goldstein S."/>
            <person name="She X."/>
            <person name="Bult C.J."/>
            <person name="Agarwala R."/>
            <person name="Cherry J.L."/>
            <person name="DiCuccio M."/>
            <person name="Hlavina W."/>
            <person name="Kapustin Y."/>
            <person name="Meric P."/>
            <person name="Maglott D."/>
            <person name="Birtle Z."/>
            <person name="Marques A.C."/>
            <person name="Graves T."/>
            <person name="Zhou S."/>
            <person name="Teague B."/>
            <person name="Potamousis K."/>
            <person name="Churas C."/>
            <person name="Place M."/>
            <person name="Herschleb J."/>
            <person name="Runnheim R."/>
            <person name="Forrest D."/>
            <person name="Amos-Landgraf J."/>
            <person name="Schwartz D.C."/>
            <person name="Cheng Z."/>
            <person name="Lindblad-Toh K."/>
            <person name="Eichler E.E."/>
            <person name="Ponting C.P."/>
        </authorList>
    </citation>
    <scope>NUCLEOTIDE SEQUENCE [LARGE SCALE GENOMIC DNA]</scope>
    <source>
        <strain>C57BL/6J</strain>
    </source>
</reference>
<reference key="2">
    <citation type="journal article" date="2004" name="Genome Res.">
        <title>The status, quality, and expansion of the NIH full-length cDNA project: the Mammalian Gene Collection (MGC).</title>
        <authorList>
            <consortium name="The MGC Project Team"/>
        </authorList>
    </citation>
    <scope>NUCLEOTIDE SEQUENCE [LARGE SCALE MRNA]</scope>
</reference>
<reference key="3">
    <citation type="journal article" date="2010" name="Cell">
        <title>A tissue-specific atlas of mouse protein phosphorylation and expression.</title>
        <authorList>
            <person name="Huttlin E.L."/>
            <person name="Jedrychowski M.P."/>
            <person name="Elias J.E."/>
            <person name="Goswami T."/>
            <person name="Rad R."/>
            <person name="Beausoleil S.A."/>
            <person name="Villen J."/>
            <person name="Haas W."/>
            <person name="Sowa M.E."/>
            <person name="Gygi S.P."/>
        </authorList>
    </citation>
    <scope>IDENTIFICATION BY MASS SPECTROMETRY [LARGE SCALE ANALYSIS]</scope>
</reference>
<reference key="4">
    <citation type="journal article" date="2020" name="Nat. Commun.">
        <title>Proline-rich protein PRR19 functions with cyclin-like CNTD1 to promote meiotic crossing over in mouse.</title>
        <authorList>
            <person name="Bondarieva A."/>
            <person name="Raveendran K."/>
            <person name="Telychko V."/>
            <person name="Rao H.B.D.P."/>
            <person name="Ravindranathan R."/>
            <person name="Zorzompokou C."/>
            <person name="Finsterbusch F."/>
            <person name="Dereli I."/>
            <person name="Papanikos F."/>
            <person name="Traenkner D."/>
            <person name="Schleiffer A."/>
            <person name="Fei J.F."/>
            <person name="Klimova A."/>
            <person name="Ito M."/>
            <person name="Kulkarni D.S."/>
            <person name="Roeder I."/>
            <person name="Hunter N."/>
            <person name="Toth A."/>
        </authorList>
    </citation>
    <scope>SUBCELLULAR LOCATION</scope>
    <scope>FUNCTION</scope>
    <scope>DISRUPTION PHENOTYPE</scope>
    <scope>INTERACTION WITH CNTD1</scope>
    <scope>TISSUE SPECIFICITY</scope>
</reference>
<dbReference type="EMBL" id="BC147639">
    <property type="protein sequence ID" value="AAI47640.1"/>
    <property type="molecule type" value="mRNA"/>
</dbReference>
<dbReference type="EMBL" id="BC147641">
    <property type="protein sequence ID" value="AAI47642.1"/>
    <property type="molecule type" value="mRNA"/>
</dbReference>
<dbReference type="EMBL" id="BC147701">
    <property type="protein sequence ID" value="AAI47702.1"/>
    <property type="molecule type" value="mRNA"/>
</dbReference>
<dbReference type="EMBL" id="BC147708">
    <property type="protein sequence ID" value="AAI47709.1"/>
    <property type="molecule type" value="mRNA"/>
</dbReference>
<dbReference type="CCDS" id="CCDS52147.1"/>
<dbReference type="RefSeq" id="NP_001074763.1">
    <property type="nucleotide sequence ID" value="NM_001081294.1"/>
</dbReference>
<dbReference type="RefSeq" id="XP_006540325.1">
    <property type="nucleotide sequence ID" value="XM_006540262.1"/>
</dbReference>
<dbReference type="RefSeq" id="XP_017177922.1">
    <property type="nucleotide sequence ID" value="XM_017322433.1"/>
</dbReference>
<dbReference type="SMR" id="B2RW88"/>
<dbReference type="FunCoup" id="B2RW88">
    <property type="interactions" value="324"/>
</dbReference>
<dbReference type="STRING" id="10090.ENSMUSP00000104047"/>
<dbReference type="PhosphoSitePlus" id="B2RW88"/>
<dbReference type="PaxDb" id="10090-ENSMUSP00000104047"/>
<dbReference type="ProteomicsDB" id="332988"/>
<dbReference type="Antibodypedia" id="45328">
    <property type="antibodies" value="84 antibodies from 14 providers"/>
</dbReference>
<dbReference type="Ensembl" id="ENSMUST00000080288.5">
    <property type="protein sequence ID" value="ENSMUSP00000104047.2"/>
    <property type="gene ID" value="ENSMUSG00000058741.5"/>
</dbReference>
<dbReference type="GeneID" id="623131"/>
<dbReference type="KEGG" id="mmu:623131"/>
<dbReference type="UCSC" id="uc009fsh.1">
    <property type="organism name" value="mouse"/>
</dbReference>
<dbReference type="AGR" id="MGI:3648539"/>
<dbReference type="CTD" id="284338"/>
<dbReference type="MGI" id="MGI:3648539">
    <property type="gene designation" value="Prr19"/>
</dbReference>
<dbReference type="VEuPathDB" id="HostDB:ENSMUSG00000058741"/>
<dbReference type="eggNOG" id="ENOG502T05H">
    <property type="taxonomic scope" value="Eukaryota"/>
</dbReference>
<dbReference type="GeneTree" id="ENSGT00390000010703"/>
<dbReference type="HOGENOM" id="CLU_073234_0_0_1"/>
<dbReference type="InParanoid" id="B2RW88"/>
<dbReference type="OMA" id="RRMTPSW"/>
<dbReference type="OrthoDB" id="9451259at2759"/>
<dbReference type="PhylomeDB" id="B2RW88"/>
<dbReference type="TreeFam" id="TF341908"/>
<dbReference type="BioGRID-ORCS" id="623131">
    <property type="hits" value="3 hits in 78 CRISPR screens"/>
</dbReference>
<dbReference type="PRO" id="PR:B2RW88"/>
<dbReference type="Proteomes" id="UP000000589">
    <property type="component" value="Chromosome 7"/>
</dbReference>
<dbReference type="RNAct" id="B2RW88">
    <property type="molecule type" value="protein"/>
</dbReference>
<dbReference type="Bgee" id="ENSMUSG00000058741">
    <property type="expression patterns" value="Expressed in testis and 25 other cell types or tissues"/>
</dbReference>
<dbReference type="GO" id="GO:0005694">
    <property type="term" value="C:chromosome"/>
    <property type="evidence" value="ECO:0000314"/>
    <property type="project" value="UniProtKB"/>
</dbReference>
<dbReference type="GO" id="GO:0005634">
    <property type="term" value="C:nucleus"/>
    <property type="evidence" value="ECO:0000314"/>
    <property type="project" value="UniProtKB"/>
</dbReference>
<dbReference type="GO" id="GO:0051321">
    <property type="term" value="P:meiotic cell cycle"/>
    <property type="evidence" value="ECO:0007669"/>
    <property type="project" value="UniProtKB-KW"/>
</dbReference>
<dbReference type="InterPro" id="IPR029355">
    <property type="entry name" value="Pro-rich_19"/>
</dbReference>
<dbReference type="PANTHER" id="PTHR37346">
    <property type="entry name" value="PROLINE-RICH PROTEIN 19"/>
    <property type="match status" value="1"/>
</dbReference>
<dbReference type="PANTHER" id="PTHR37346:SF1">
    <property type="entry name" value="PROLINE-RICH PROTEIN 19"/>
    <property type="match status" value="1"/>
</dbReference>
<dbReference type="Pfam" id="PF15455">
    <property type="entry name" value="Pro-rich_19"/>
    <property type="match status" value="1"/>
</dbReference>
<proteinExistence type="evidence at protein level"/>
<sequence length="366" mass="40149">MDPRGPVPQPFQQLQKPGRIRRRKTRRERNKALVSSHRPLARQDPPISSRDPCVILQDPVASAAPKLVVITQGRLSREHRGLFNHEVKSLDVARLLNRGALESHTPQLPTKPSCSPVGVQEPDLQSKGKENKVPGGSGPGPPNSPDLPVLGQLLEELQYQLIVPQAFPRRNLVQESRDTIIRTLQGCHGCVPDLALVLRGCQLPLPEAKPRVPERQRMASSCMEVPEHAPREGKQRTQQATKGCDFAIPHTCNSTTPAHRGSQVQPPGHQLPFLSSASSPSGAAWGPPTAFDMLKSIWLIATPPPPPPQPWDVRPPQPLPQPPSPLLPRTSALDWSPNPPAPLPSLSWVVTQSSPEAWSFPPMRLY</sequence>
<feature type="chain" id="PRO_0000454452" description="Proline-rich protein 19">
    <location>
        <begin position="1"/>
        <end position="366"/>
    </location>
</feature>
<feature type="region of interest" description="Disordered" evidence="1">
    <location>
        <begin position="1"/>
        <end position="53"/>
    </location>
</feature>
<feature type="region of interest" description="Disordered" evidence="1">
    <location>
        <begin position="102"/>
        <end position="149"/>
    </location>
</feature>
<feature type="region of interest" description="Disordered" evidence="1">
    <location>
        <begin position="256"/>
        <end position="286"/>
    </location>
</feature>
<feature type="region of interest" description="Disordered" evidence="1">
    <location>
        <begin position="301"/>
        <end position="338"/>
    </location>
</feature>
<feature type="compositionally biased region" description="Basic residues" evidence="1">
    <location>
        <begin position="18"/>
        <end position="29"/>
    </location>
</feature>
<feature type="compositionally biased region" description="Polar residues" evidence="1">
    <location>
        <begin position="104"/>
        <end position="113"/>
    </location>
</feature>
<feature type="compositionally biased region" description="Polar residues" evidence="1">
    <location>
        <begin position="256"/>
        <end position="265"/>
    </location>
</feature>
<feature type="compositionally biased region" description="Low complexity" evidence="1">
    <location>
        <begin position="275"/>
        <end position="286"/>
    </location>
</feature>
<feature type="compositionally biased region" description="Pro residues" evidence="1">
    <location>
        <begin position="302"/>
        <end position="326"/>
    </location>
</feature>
<keyword id="KW-0158">Chromosome</keyword>
<keyword id="KW-0469">Meiosis</keyword>
<keyword id="KW-0539">Nucleus</keyword>
<keyword id="KW-1185">Reference proteome</keyword>